<proteinExistence type="inferred from homology"/>
<keyword id="KW-0030">Aminoacyl-tRNA synthetase</keyword>
<keyword id="KW-0067">ATP-binding</keyword>
<keyword id="KW-0963">Cytoplasm</keyword>
<keyword id="KW-0436">Ligase</keyword>
<keyword id="KW-0547">Nucleotide-binding</keyword>
<keyword id="KW-0648">Protein biosynthesis</keyword>
<gene>
    <name evidence="1" type="primary">serS</name>
    <name type="ordered locus">GTNG_0013</name>
</gene>
<organism>
    <name type="scientific">Geobacillus thermodenitrificans (strain NG80-2)</name>
    <dbReference type="NCBI Taxonomy" id="420246"/>
    <lineage>
        <taxon>Bacteria</taxon>
        <taxon>Bacillati</taxon>
        <taxon>Bacillota</taxon>
        <taxon>Bacilli</taxon>
        <taxon>Bacillales</taxon>
        <taxon>Anoxybacillaceae</taxon>
        <taxon>Geobacillus</taxon>
    </lineage>
</organism>
<name>SYS_GEOTN</name>
<reference key="1">
    <citation type="journal article" date="2007" name="Proc. Natl. Acad. Sci. U.S.A.">
        <title>Genome and proteome of long-chain alkane degrading Geobacillus thermodenitrificans NG80-2 isolated from a deep-subsurface oil reservoir.</title>
        <authorList>
            <person name="Feng L."/>
            <person name="Wang W."/>
            <person name="Cheng J."/>
            <person name="Ren Y."/>
            <person name="Zhao G."/>
            <person name="Gao C."/>
            <person name="Tang Y."/>
            <person name="Liu X."/>
            <person name="Han W."/>
            <person name="Peng X."/>
            <person name="Liu R."/>
            <person name="Wang L."/>
        </authorList>
    </citation>
    <scope>NUCLEOTIDE SEQUENCE [LARGE SCALE GENOMIC DNA]</scope>
    <source>
        <strain>NG80-2</strain>
    </source>
</reference>
<comment type="function">
    <text evidence="1">Catalyzes the attachment of serine to tRNA(Ser). Is also able to aminoacylate tRNA(Sec) with serine, to form the misacylated tRNA L-seryl-tRNA(Sec), which will be further converted into selenocysteinyl-tRNA(Sec).</text>
</comment>
<comment type="catalytic activity">
    <reaction evidence="1">
        <text>tRNA(Ser) + L-serine + ATP = L-seryl-tRNA(Ser) + AMP + diphosphate + H(+)</text>
        <dbReference type="Rhea" id="RHEA:12292"/>
        <dbReference type="Rhea" id="RHEA-COMP:9669"/>
        <dbReference type="Rhea" id="RHEA-COMP:9703"/>
        <dbReference type="ChEBI" id="CHEBI:15378"/>
        <dbReference type="ChEBI" id="CHEBI:30616"/>
        <dbReference type="ChEBI" id="CHEBI:33019"/>
        <dbReference type="ChEBI" id="CHEBI:33384"/>
        <dbReference type="ChEBI" id="CHEBI:78442"/>
        <dbReference type="ChEBI" id="CHEBI:78533"/>
        <dbReference type="ChEBI" id="CHEBI:456215"/>
        <dbReference type="EC" id="6.1.1.11"/>
    </reaction>
</comment>
<comment type="catalytic activity">
    <reaction evidence="1">
        <text>tRNA(Sec) + L-serine + ATP = L-seryl-tRNA(Sec) + AMP + diphosphate + H(+)</text>
        <dbReference type="Rhea" id="RHEA:42580"/>
        <dbReference type="Rhea" id="RHEA-COMP:9742"/>
        <dbReference type="Rhea" id="RHEA-COMP:10128"/>
        <dbReference type="ChEBI" id="CHEBI:15378"/>
        <dbReference type="ChEBI" id="CHEBI:30616"/>
        <dbReference type="ChEBI" id="CHEBI:33019"/>
        <dbReference type="ChEBI" id="CHEBI:33384"/>
        <dbReference type="ChEBI" id="CHEBI:78442"/>
        <dbReference type="ChEBI" id="CHEBI:78533"/>
        <dbReference type="ChEBI" id="CHEBI:456215"/>
        <dbReference type="EC" id="6.1.1.11"/>
    </reaction>
</comment>
<comment type="pathway">
    <text evidence="1">Aminoacyl-tRNA biosynthesis; selenocysteinyl-tRNA(Sec) biosynthesis; L-seryl-tRNA(Sec) from L-serine and tRNA(Sec): step 1/1.</text>
</comment>
<comment type="subunit">
    <text evidence="1">Homodimer. The tRNA molecule binds across the dimer.</text>
</comment>
<comment type="subcellular location">
    <subcellularLocation>
        <location evidence="1">Cytoplasm</location>
    </subcellularLocation>
</comment>
<comment type="domain">
    <text evidence="1">Consists of two distinct domains, a catalytic core and a N-terminal extension that is involved in tRNA binding.</text>
</comment>
<comment type="similarity">
    <text evidence="1">Belongs to the class-II aminoacyl-tRNA synthetase family. Type-1 seryl-tRNA synthetase subfamily.</text>
</comment>
<sequence>MLDVKLLRTQFQEVKEKLLQRGDDLANIDRFEQLDKERRRLIAQVEELKSKRNEVSQQIAVLKREKKDAESLIAEMREVGDRIKQMDEQIRQLEEELDSLLLSIPNVPHESVPVGQSEEDNVEVRRWGEPRSFSFEPKPHWDIADQLGLLDFERAAKVAGSRFVFYKGLGARLERALINFMLDIHLDEFGYQEVLPPYLVNRASMIGTGQLPKFAEDAFHLDNEDYFLIPTAEVPVTNLHRDEILTADDLPLYYAAYSACFRAEAGSAGRDTRGLIRQHQFNKVELVKFVKPEDSYDELEKLTHQAETILQRLGLPYRVVALCTGDLGFSAAKTYDIEVWLPSYGTYREISSCSNFEAFQARRANIRFRREPKAKPEYVHTLNGSGLAIGRTVAAILENYQQEDGSVVIPGALRPYMGNRDVIR</sequence>
<dbReference type="EC" id="6.1.1.11" evidence="1"/>
<dbReference type="EMBL" id="CP000557">
    <property type="protein sequence ID" value="ABO65400.1"/>
    <property type="molecule type" value="Genomic_DNA"/>
</dbReference>
<dbReference type="RefSeq" id="WP_011886595.1">
    <property type="nucleotide sequence ID" value="NC_009328.1"/>
</dbReference>
<dbReference type="SMR" id="A4IJ96"/>
<dbReference type="KEGG" id="gtn:GTNG_0013"/>
<dbReference type="eggNOG" id="COG0172">
    <property type="taxonomic scope" value="Bacteria"/>
</dbReference>
<dbReference type="HOGENOM" id="CLU_023797_1_1_9"/>
<dbReference type="UniPathway" id="UPA00906">
    <property type="reaction ID" value="UER00895"/>
</dbReference>
<dbReference type="Proteomes" id="UP000001578">
    <property type="component" value="Chromosome"/>
</dbReference>
<dbReference type="GO" id="GO:0005737">
    <property type="term" value="C:cytoplasm"/>
    <property type="evidence" value="ECO:0007669"/>
    <property type="project" value="UniProtKB-SubCell"/>
</dbReference>
<dbReference type="GO" id="GO:0005524">
    <property type="term" value="F:ATP binding"/>
    <property type="evidence" value="ECO:0007669"/>
    <property type="project" value="UniProtKB-UniRule"/>
</dbReference>
<dbReference type="GO" id="GO:0140096">
    <property type="term" value="F:catalytic activity, acting on a protein"/>
    <property type="evidence" value="ECO:0007669"/>
    <property type="project" value="UniProtKB-ARBA"/>
</dbReference>
<dbReference type="GO" id="GO:0004828">
    <property type="term" value="F:serine-tRNA ligase activity"/>
    <property type="evidence" value="ECO:0007669"/>
    <property type="project" value="UniProtKB-UniRule"/>
</dbReference>
<dbReference type="GO" id="GO:0016740">
    <property type="term" value="F:transferase activity"/>
    <property type="evidence" value="ECO:0007669"/>
    <property type="project" value="UniProtKB-ARBA"/>
</dbReference>
<dbReference type="GO" id="GO:0016260">
    <property type="term" value="P:selenocysteine biosynthetic process"/>
    <property type="evidence" value="ECO:0007669"/>
    <property type="project" value="UniProtKB-UniRule"/>
</dbReference>
<dbReference type="GO" id="GO:0006434">
    <property type="term" value="P:seryl-tRNA aminoacylation"/>
    <property type="evidence" value="ECO:0007669"/>
    <property type="project" value="UniProtKB-UniRule"/>
</dbReference>
<dbReference type="CDD" id="cd00770">
    <property type="entry name" value="SerRS_core"/>
    <property type="match status" value="1"/>
</dbReference>
<dbReference type="Gene3D" id="3.30.930.10">
    <property type="entry name" value="Bira Bifunctional Protein, Domain 2"/>
    <property type="match status" value="1"/>
</dbReference>
<dbReference type="Gene3D" id="1.10.287.40">
    <property type="entry name" value="Serine-tRNA synthetase, tRNA binding domain"/>
    <property type="match status" value="1"/>
</dbReference>
<dbReference type="HAMAP" id="MF_00176">
    <property type="entry name" value="Ser_tRNA_synth_type1"/>
    <property type="match status" value="1"/>
</dbReference>
<dbReference type="InterPro" id="IPR002314">
    <property type="entry name" value="aa-tRNA-synt_IIb"/>
</dbReference>
<dbReference type="InterPro" id="IPR006195">
    <property type="entry name" value="aa-tRNA-synth_II"/>
</dbReference>
<dbReference type="InterPro" id="IPR045864">
    <property type="entry name" value="aa-tRNA-synth_II/BPL/LPL"/>
</dbReference>
<dbReference type="InterPro" id="IPR002317">
    <property type="entry name" value="Ser-tRNA-ligase_type_1"/>
</dbReference>
<dbReference type="InterPro" id="IPR015866">
    <property type="entry name" value="Ser-tRNA-synth_1_N"/>
</dbReference>
<dbReference type="InterPro" id="IPR042103">
    <property type="entry name" value="SerRS_1_N_sf"/>
</dbReference>
<dbReference type="InterPro" id="IPR033729">
    <property type="entry name" value="SerRS_core"/>
</dbReference>
<dbReference type="InterPro" id="IPR010978">
    <property type="entry name" value="tRNA-bd_arm"/>
</dbReference>
<dbReference type="NCBIfam" id="TIGR00414">
    <property type="entry name" value="serS"/>
    <property type="match status" value="1"/>
</dbReference>
<dbReference type="PANTHER" id="PTHR43697:SF1">
    <property type="entry name" value="SERINE--TRNA LIGASE"/>
    <property type="match status" value="1"/>
</dbReference>
<dbReference type="PANTHER" id="PTHR43697">
    <property type="entry name" value="SERYL-TRNA SYNTHETASE"/>
    <property type="match status" value="1"/>
</dbReference>
<dbReference type="Pfam" id="PF02403">
    <property type="entry name" value="Seryl_tRNA_N"/>
    <property type="match status" value="1"/>
</dbReference>
<dbReference type="Pfam" id="PF00587">
    <property type="entry name" value="tRNA-synt_2b"/>
    <property type="match status" value="1"/>
</dbReference>
<dbReference type="PIRSF" id="PIRSF001529">
    <property type="entry name" value="Ser-tRNA-synth_IIa"/>
    <property type="match status" value="1"/>
</dbReference>
<dbReference type="PRINTS" id="PR00981">
    <property type="entry name" value="TRNASYNTHSER"/>
</dbReference>
<dbReference type="SUPFAM" id="SSF55681">
    <property type="entry name" value="Class II aaRS and biotin synthetases"/>
    <property type="match status" value="1"/>
</dbReference>
<dbReference type="SUPFAM" id="SSF46589">
    <property type="entry name" value="tRNA-binding arm"/>
    <property type="match status" value="1"/>
</dbReference>
<dbReference type="PROSITE" id="PS50862">
    <property type="entry name" value="AA_TRNA_LIGASE_II"/>
    <property type="match status" value="1"/>
</dbReference>
<evidence type="ECO:0000255" key="1">
    <source>
        <dbReference type="HAMAP-Rule" id="MF_00176"/>
    </source>
</evidence>
<accession>A4IJ96</accession>
<protein>
    <recommendedName>
        <fullName evidence="1">Serine--tRNA ligase</fullName>
        <ecNumber evidence="1">6.1.1.11</ecNumber>
    </recommendedName>
    <alternativeName>
        <fullName evidence="1">Seryl-tRNA synthetase</fullName>
        <shortName evidence="1">SerRS</shortName>
    </alternativeName>
    <alternativeName>
        <fullName evidence="1">Seryl-tRNA(Ser/Sec) synthetase</fullName>
    </alternativeName>
</protein>
<feature type="chain" id="PRO_1000019688" description="Serine--tRNA ligase">
    <location>
        <begin position="1"/>
        <end position="424"/>
    </location>
</feature>
<feature type="binding site" evidence="1">
    <location>
        <begin position="231"/>
        <end position="233"/>
    </location>
    <ligand>
        <name>L-serine</name>
        <dbReference type="ChEBI" id="CHEBI:33384"/>
    </ligand>
</feature>
<feature type="binding site" evidence="1">
    <location>
        <begin position="262"/>
        <end position="264"/>
    </location>
    <ligand>
        <name>ATP</name>
        <dbReference type="ChEBI" id="CHEBI:30616"/>
    </ligand>
</feature>
<feature type="binding site" evidence="1">
    <location>
        <position position="285"/>
    </location>
    <ligand>
        <name>L-serine</name>
        <dbReference type="ChEBI" id="CHEBI:33384"/>
    </ligand>
</feature>
<feature type="binding site" evidence="1">
    <location>
        <begin position="349"/>
        <end position="352"/>
    </location>
    <ligand>
        <name>ATP</name>
        <dbReference type="ChEBI" id="CHEBI:30616"/>
    </ligand>
</feature>
<feature type="binding site" evidence="1">
    <location>
        <position position="385"/>
    </location>
    <ligand>
        <name>L-serine</name>
        <dbReference type="ChEBI" id="CHEBI:33384"/>
    </ligand>
</feature>